<comment type="function">
    <text evidence="1">Catalyzes the formation of S-adenosylmethionine from methionine and ATP.</text>
</comment>
<comment type="catalytic activity">
    <reaction evidence="1">
        <text>L-methionine + ATP + H2O = S-adenosyl-L-methionine + phosphate + diphosphate</text>
        <dbReference type="Rhea" id="RHEA:21080"/>
        <dbReference type="ChEBI" id="CHEBI:15377"/>
        <dbReference type="ChEBI" id="CHEBI:30616"/>
        <dbReference type="ChEBI" id="CHEBI:33019"/>
        <dbReference type="ChEBI" id="CHEBI:43474"/>
        <dbReference type="ChEBI" id="CHEBI:57844"/>
        <dbReference type="ChEBI" id="CHEBI:59789"/>
        <dbReference type="EC" id="2.5.1.6"/>
    </reaction>
</comment>
<comment type="cofactor">
    <cofactor evidence="1">
        <name>Mg(2+)</name>
        <dbReference type="ChEBI" id="CHEBI:18420"/>
    </cofactor>
</comment>
<comment type="pathway">
    <text evidence="1">Amino-acid biosynthesis; S-adenosyl-L-methionine biosynthesis; S-adenosyl-L-methionine from L-methionine: step 1/1.</text>
</comment>
<comment type="similarity">
    <text evidence="1">Belongs to the AdoMet synthase 2 family.</text>
</comment>
<protein>
    <recommendedName>
        <fullName evidence="1">S-adenosylmethionine synthase</fullName>
        <shortName evidence="1">AdoMet synthase</shortName>
        <ecNumber evidence="1">2.5.1.6</ecNumber>
    </recommendedName>
    <alternativeName>
        <fullName evidence="1">Methionine adenosyltransferase</fullName>
    </alternativeName>
</protein>
<evidence type="ECO:0000255" key="1">
    <source>
        <dbReference type="HAMAP-Rule" id="MF_00136"/>
    </source>
</evidence>
<feature type="chain" id="PRO_0000150042" description="S-adenosylmethionine synthase">
    <location>
        <begin position="1"/>
        <end position="405"/>
    </location>
</feature>
<feature type="binding site" evidence="1">
    <location>
        <begin position="139"/>
        <end position="144"/>
    </location>
    <ligand>
        <name>ATP</name>
        <dbReference type="ChEBI" id="CHEBI:30616"/>
    </ligand>
</feature>
<organism>
    <name type="scientific">Sulfurisphaera tokodaii (strain DSM 16993 / JCM 10545 / NBRC 100140 / 7)</name>
    <name type="common">Sulfolobus tokodaii</name>
    <dbReference type="NCBI Taxonomy" id="273063"/>
    <lineage>
        <taxon>Archaea</taxon>
        <taxon>Thermoproteota</taxon>
        <taxon>Thermoprotei</taxon>
        <taxon>Sulfolobales</taxon>
        <taxon>Sulfolobaceae</taxon>
        <taxon>Sulfurisphaera</taxon>
    </lineage>
</organism>
<dbReference type="EC" id="2.5.1.6" evidence="1"/>
<dbReference type="EMBL" id="BA000023">
    <property type="protein sequence ID" value="BAK54204.1"/>
    <property type="molecule type" value="Genomic_DNA"/>
</dbReference>
<dbReference type="RefSeq" id="WP_010978176.1">
    <property type="nucleotide sequence ID" value="NC_003106.2"/>
</dbReference>
<dbReference type="SMR" id="Q976F3"/>
<dbReference type="STRING" id="273063.STK_02350"/>
<dbReference type="KEGG" id="sto:STK_02350"/>
<dbReference type="PATRIC" id="fig|273063.9.peg.280"/>
<dbReference type="eggNOG" id="arCOG01678">
    <property type="taxonomic scope" value="Archaea"/>
</dbReference>
<dbReference type="OrthoDB" id="204488at2157"/>
<dbReference type="UniPathway" id="UPA00315">
    <property type="reaction ID" value="UER00080"/>
</dbReference>
<dbReference type="Proteomes" id="UP000001015">
    <property type="component" value="Chromosome"/>
</dbReference>
<dbReference type="GO" id="GO:0005524">
    <property type="term" value="F:ATP binding"/>
    <property type="evidence" value="ECO:0007669"/>
    <property type="project" value="UniProtKB-UniRule"/>
</dbReference>
<dbReference type="GO" id="GO:0000287">
    <property type="term" value="F:magnesium ion binding"/>
    <property type="evidence" value="ECO:0007669"/>
    <property type="project" value="UniProtKB-UniRule"/>
</dbReference>
<dbReference type="GO" id="GO:0004478">
    <property type="term" value="F:methionine adenosyltransferase activity"/>
    <property type="evidence" value="ECO:0007669"/>
    <property type="project" value="UniProtKB-UniRule"/>
</dbReference>
<dbReference type="GO" id="GO:0006730">
    <property type="term" value="P:one-carbon metabolic process"/>
    <property type="evidence" value="ECO:0007669"/>
    <property type="project" value="UniProtKB-KW"/>
</dbReference>
<dbReference type="GO" id="GO:0006556">
    <property type="term" value="P:S-adenosylmethionine biosynthetic process"/>
    <property type="evidence" value="ECO:0007669"/>
    <property type="project" value="UniProtKB-UniRule"/>
</dbReference>
<dbReference type="Gene3D" id="3.30.300.10">
    <property type="match status" value="1"/>
</dbReference>
<dbReference type="Gene3D" id="3.30.300.280">
    <property type="entry name" value="S-adenosylmethionine synthetase, C-terminal domain"/>
    <property type="match status" value="2"/>
</dbReference>
<dbReference type="HAMAP" id="MF_00136">
    <property type="entry name" value="S_AdoMet_synth2"/>
    <property type="match status" value="1"/>
</dbReference>
<dbReference type="InterPro" id="IPR027790">
    <property type="entry name" value="AdoMet_synthase_2_family"/>
</dbReference>
<dbReference type="InterPro" id="IPR042544">
    <property type="entry name" value="AdoMet_synthase_3"/>
</dbReference>
<dbReference type="InterPro" id="IPR002795">
    <property type="entry name" value="S-AdoMet_synthetase_arc"/>
</dbReference>
<dbReference type="NCBIfam" id="NF003365">
    <property type="entry name" value="PRK04439.1-4"/>
    <property type="match status" value="1"/>
</dbReference>
<dbReference type="NCBIfam" id="NF003366">
    <property type="entry name" value="PRK04439.1-5"/>
    <property type="match status" value="1"/>
</dbReference>
<dbReference type="PANTHER" id="PTHR36697">
    <property type="entry name" value="S-ADENOSYLMETHIONINE SYNTHASE"/>
    <property type="match status" value="1"/>
</dbReference>
<dbReference type="PANTHER" id="PTHR36697:SF1">
    <property type="entry name" value="S-ADENOSYLMETHIONINE SYNTHASE"/>
    <property type="match status" value="1"/>
</dbReference>
<dbReference type="Pfam" id="PF01941">
    <property type="entry name" value="AdoMet_Synthase"/>
    <property type="match status" value="1"/>
</dbReference>
<proteinExistence type="inferred from homology"/>
<reference key="1">
    <citation type="journal article" date="2001" name="DNA Res.">
        <title>Complete genome sequence of an aerobic thermoacidophilic Crenarchaeon, Sulfolobus tokodaii strain7.</title>
        <authorList>
            <person name="Kawarabayasi Y."/>
            <person name="Hino Y."/>
            <person name="Horikawa H."/>
            <person name="Jin-no K."/>
            <person name="Takahashi M."/>
            <person name="Sekine M."/>
            <person name="Baba S."/>
            <person name="Ankai A."/>
            <person name="Kosugi H."/>
            <person name="Hosoyama A."/>
            <person name="Fukui S."/>
            <person name="Nagai Y."/>
            <person name="Nishijima K."/>
            <person name="Otsuka R."/>
            <person name="Nakazawa H."/>
            <person name="Takamiya M."/>
            <person name="Kato Y."/>
            <person name="Yoshizawa T."/>
            <person name="Tanaka T."/>
            <person name="Kudoh Y."/>
            <person name="Yamazaki J."/>
            <person name="Kushida N."/>
            <person name="Oguchi A."/>
            <person name="Aoki K."/>
            <person name="Masuda S."/>
            <person name="Yanagii M."/>
            <person name="Nishimura M."/>
            <person name="Yamagishi A."/>
            <person name="Oshima T."/>
            <person name="Kikuchi H."/>
        </authorList>
    </citation>
    <scope>NUCLEOTIDE SEQUENCE [LARGE SCALE GENOMIC DNA]</scope>
    <source>
        <strain>DSM 16993 / JCM 10545 / NBRC 100140 / 7</strain>
    </source>
</reference>
<accession>Q976F3</accession>
<accession>F9VMQ8</accession>
<gene>
    <name evidence="1" type="primary">mat</name>
    <name type="ordered locus">STK_02350</name>
</gene>
<sequence>MRNINVQLSHWVDIDSLEVELVERKGTGHPDYIADSASEEASRKLSLYYLKRYGTILHHNLDKTLVVGGQASPRFKGGEVLQPIYIIVAGRATTEVKTESGIESIPVGTIIIESVKEWIKEHFRYLDPEKHVIVDYKIGKGSADLVGIFEVAKKSVPLSNDTSFGVGFAPYSKLENLVYQTERYLNSKEMKAKIPEIGEDIKVMGLRKGKTIELTIAMAVISQLVSDLNHYIAVKEEAKQAILDLASKLVPDYDVKVNINTGDKIDKGIVYLTVTGTSAEHGDDGMTGRGNRATGLITPMRPMSLEATAGKNPVNHVGKIYNIVANLIAQKVSTEVKGVKNVQVEVLGQIGRPIDDPLIANVQVTTENGSLTSEMKREIEGISDEILGSITKISDLILENKVMLF</sequence>
<keyword id="KW-0067">ATP-binding</keyword>
<keyword id="KW-0460">Magnesium</keyword>
<keyword id="KW-0547">Nucleotide-binding</keyword>
<keyword id="KW-0554">One-carbon metabolism</keyword>
<keyword id="KW-1185">Reference proteome</keyword>
<keyword id="KW-0808">Transferase</keyword>
<name>METK_SULTO</name>